<sequence length="340" mass="38170">MYKSLIRPTLFKFDPEEIHYFTFNFLRKFCKIPGATSYLKSKFQVKDARLEREVFGLKFKNPVGLAAGFDKDAKLYNELSSLGFGFIEVGTVTPKPQPGNDKKRLFRLKEDSAIINRMGFNNEGVEATVNRLKSNKNVLIGGNIGKNKATPNEHAVEDYTYSFEALFDYVNYFVVNVSSPNTPNLRELQDKEPLKDLLNTLQKKNEQKKRPKPILLKIAPDLTDEQLMDIIEIVQETKIAGVIATNTTISREGLKSENKNEMGGLSGKPLTKRSTEVIRFLSEKSNKAFPIIGVGGIHTAEDAIEKLEAGASLVQLYTGFIYEGPALIKDINQKILEKGL</sequence>
<name>PYRD_CHRFK</name>
<reference key="1">
    <citation type="journal article" date="2006" name="Environ. Microbiol.">
        <title>Whole genome analysis of the marine Bacteroidetes'Gramella forsetii' reveals adaptations to degradation of polymeric organic matter.</title>
        <authorList>
            <person name="Bauer M."/>
            <person name="Kube M."/>
            <person name="Teeling H."/>
            <person name="Richter M."/>
            <person name="Lombardot T."/>
            <person name="Allers E."/>
            <person name="Wuerdemann C.A."/>
            <person name="Quast C."/>
            <person name="Kuhl H."/>
            <person name="Knaust F."/>
            <person name="Woebken D."/>
            <person name="Bischof K."/>
            <person name="Mussmann M."/>
            <person name="Choudhuri J.V."/>
            <person name="Meyer F."/>
            <person name="Reinhardt R."/>
            <person name="Amann R.I."/>
            <person name="Gloeckner F.O."/>
        </authorList>
    </citation>
    <scope>NUCLEOTIDE SEQUENCE [LARGE SCALE GENOMIC DNA]</scope>
    <source>
        <strain>DSM 17595 / CGMCC 1.15422 / KT0803</strain>
    </source>
</reference>
<organism>
    <name type="scientific">Christiangramia forsetii (strain DSM 17595 / CGMCC 1.15422 / KT0803)</name>
    <name type="common">Gramella forsetii</name>
    <dbReference type="NCBI Taxonomy" id="411154"/>
    <lineage>
        <taxon>Bacteria</taxon>
        <taxon>Pseudomonadati</taxon>
        <taxon>Bacteroidota</taxon>
        <taxon>Flavobacteriia</taxon>
        <taxon>Flavobacteriales</taxon>
        <taxon>Flavobacteriaceae</taxon>
        <taxon>Christiangramia</taxon>
    </lineage>
</organism>
<keyword id="KW-1003">Cell membrane</keyword>
<keyword id="KW-0285">Flavoprotein</keyword>
<keyword id="KW-0288">FMN</keyword>
<keyword id="KW-0472">Membrane</keyword>
<keyword id="KW-0560">Oxidoreductase</keyword>
<keyword id="KW-0665">Pyrimidine biosynthesis</keyword>
<comment type="function">
    <text evidence="1">Catalyzes the conversion of dihydroorotate to orotate with quinone as electron acceptor.</text>
</comment>
<comment type="catalytic activity">
    <reaction evidence="1">
        <text>(S)-dihydroorotate + a quinone = orotate + a quinol</text>
        <dbReference type="Rhea" id="RHEA:30187"/>
        <dbReference type="ChEBI" id="CHEBI:24646"/>
        <dbReference type="ChEBI" id="CHEBI:30839"/>
        <dbReference type="ChEBI" id="CHEBI:30864"/>
        <dbReference type="ChEBI" id="CHEBI:132124"/>
        <dbReference type="EC" id="1.3.5.2"/>
    </reaction>
</comment>
<comment type="cofactor">
    <cofactor evidence="1">
        <name>FMN</name>
        <dbReference type="ChEBI" id="CHEBI:58210"/>
    </cofactor>
    <text evidence="1">Binds 1 FMN per subunit.</text>
</comment>
<comment type="pathway">
    <text evidence="1">Pyrimidine metabolism; UMP biosynthesis via de novo pathway; orotate from (S)-dihydroorotate (quinone route): step 1/1.</text>
</comment>
<comment type="subunit">
    <text evidence="1">Monomer.</text>
</comment>
<comment type="subcellular location">
    <subcellularLocation>
        <location evidence="1">Cell membrane</location>
        <topology evidence="1">Peripheral membrane protein</topology>
    </subcellularLocation>
</comment>
<comment type="similarity">
    <text evidence="1">Belongs to the dihydroorotate dehydrogenase family. Type 2 subfamily.</text>
</comment>
<accession>A0M4D0</accession>
<gene>
    <name evidence="1" type="primary">pyrD</name>
    <name type="ordered locus">GFO_2519</name>
</gene>
<protein>
    <recommendedName>
        <fullName evidence="1">Dihydroorotate dehydrogenase (quinone)</fullName>
        <ecNumber evidence="1">1.3.5.2</ecNumber>
    </recommendedName>
    <alternativeName>
        <fullName evidence="1">DHOdehase</fullName>
        <shortName evidence="1">DHOD</shortName>
        <shortName evidence="1">DHODase</shortName>
    </alternativeName>
    <alternativeName>
        <fullName evidence="1">Dihydroorotate oxidase</fullName>
    </alternativeName>
</protein>
<dbReference type="EC" id="1.3.5.2" evidence="1"/>
<dbReference type="EMBL" id="CU207366">
    <property type="protein sequence ID" value="CAL67475.1"/>
    <property type="molecule type" value="Genomic_DNA"/>
</dbReference>
<dbReference type="RefSeq" id="WP_011710378.1">
    <property type="nucleotide sequence ID" value="NC_008571.1"/>
</dbReference>
<dbReference type="SMR" id="A0M4D0"/>
<dbReference type="STRING" id="411154.GFO_2519"/>
<dbReference type="KEGG" id="gfo:GFO_2519"/>
<dbReference type="eggNOG" id="COG0167">
    <property type="taxonomic scope" value="Bacteria"/>
</dbReference>
<dbReference type="HOGENOM" id="CLU_013640_2_0_10"/>
<dbReference type="OrthoDB" id="9802377at2"/>
<dbReference type="UniPathway" id="UPA00070">
    <property type="reaction ID" value="UER00946"/>
</dbReference>
<dbReference type="Proteomes" id="UP000000755">
    <property type="component" value="Chromosome"/>
</dbReference>
<dbReference type="GO" id="GO:0005737">
    <property type="term" value="C:cytoplasm"/>
    <property type="evidence" value="ECO:0007669"/>
    <property type="project" value="InterPro"/>
</dbReference>
<dbReference type="GO" id="GO:0005886">
    <property type="term" value="C:plasma membrane"/>
    <property type="evidence" value="ECO:0007669"/>
    <property type="project" value="UniProtKB-SubCell"/>
</dbReference>
<dbReference type="GO" id="GO:0106430">
    <property type="term" value="F:dihydroorotate dehydrogenase (quinone) activity"/>
    <property type="evidence" value="ECO:0007669"/>
    <property type="project" value="UniProtKB-EC"/>
</dbReference>
<dbReference type="GO" id="GO:0006207">
    <property type="term" value="P:'de novo' pyrimidine nucleobase biosynthetic process"/>
    <property type="evidence" value="ECO:0007669"/>
    <property type="project" value="InterPro"/>
</dbReference>
<dbReference type="GO" id="GO:0044205">
    <property type="term" value="P:'de novo' UMP biosynthetic process"/>
    <property type="evidence" value="ECO:0007669"/>
    <property type="project" value="UniProtKB-UniRule"/>
</dbReference>
<dbReference type="CDD" id="cd04738">
    <property type="entry name" value="DHOD_2_like"/>
    <property type="match status" value="1"/>
</dbReference>
<dbReference type="Gene3D" id="3.20.20.70">
    <property type="entry name" value="Aldolase class I"/>
    <property type="match status" value="1"/>
</dbReference>
<dbReference type="HAMAP" id="MF_00225">
    <property type="entry name" value="DHO_dh_type2"/>
    <property type="match status" value="1"/>
</dbReference>
<dbReference type="InterPro" id="IPR013785">
    <property type="entry name" value="Aldolase_TIM"/>
</dbReference>
<dbReference type="InterPro" id="IPR050074">
    <property type="entry name" value="DHO_dehydrogenase"/>
</dbReference>
<dbReference type="InterPro" id="IPR012135">
    <property type="entry name" value="Dihydroorotate_DH_1_2"/>
</dbReference>
<dbReference type="InterPro" id="IPR005719">
    <property type="entry name" value="Dihydroorotate_DH_2"/>
</dbReference>
<dbReference type="InterPro" id="IPR005720">
    <property type="entry name" value="Dihydroorotate_DH_cat"/>
</dbReference>
<dbReference type="InterPro" id="IPR001295">
    <property type="entry name" value="Dihydroorotate_DH_CS"/>
</dbReference>
<dbReference type="NCBIfam" id="NF003645">
    <property type="entry name" value="PRK05286.1-2"/>
    <property type="match status" value="1"/>
</dbReference>
<dbReference type="NCBIfam" id="NF003652">
    <property type="entry name" value="PRK05286.2-5"/>
    <property type="match status" value="1"/>
</dbReference>
<dbReference type="NCBIfam" id="TIGR01036">
    <property type="entry name" value="pyrD_sub2"/>
    <property type="match status" value="1"/>
</dbReference>
<dbReference type="PANTHER" id="PTHR48109:SF4">
    <property type="entry name" value="DIHYDROOROTATE DEHYDROGENASE (QUINONE), MITOCHONDRIAL"/>
    <property type="match status" value="1"/>
</dbReference>
<dbReference type="PANTHER" id="PTHR48109">
    <property type="entry name" value="DIHYDROOROTATE DEHYDROGENASE (QUINONE), MITOCHONDRIAL-RELATED"/>
    <property type="match status" value="1"/>
</dbReference>
<dbReference type="Pfam" id="PF01180">
    <property type="entry name" value="DHO_dh"/>
    <property type="match status" value="1"/>
</dbReference>
<dbReference type="PIRSF" id="PIRSF000164">
    <property type="entry name" value="DHO_oxidase"/>
    <property type="match status" value="1"/>
</dbReference>
<dbReference type="SUPFAM" id="SSF51395">
    <property type="entry name" value="FMN-linked oxidoreductases"/>
    <property type="match status" value="1"/>
</dbReference>
<dbReference type="PROSITE" id="PS00912">
    <property type="entry name" value="DHODEHASE_2"/>
    <property type="match status" value="1"/>
</dbReference>
<evidence type="ECO:0000255" key="1">
    <source>
        <dbReference type="HAMAP-Rule" id="MF_00225"/>
    </source>
</evidence>
<feature type="chain" id="PRO_0000336468" description="Dihydroorotate dehydrogenase (quinone)">
    <location>
        <begin position="1"/>
        <end position="340"/>
    </location>
</feature>
<feature type="active site" description="Nucleophile" evidence="1">
    <location>
        <position position="179"/>
    </location>
</feature>
<feature type="binding site" evidence="1">
    <location>
        <begin position="67"/>
        <end position="71"/>
    </location>
    <ligand>
        <name>FMN</name>
        <dbReference type="ChEBI" id="CHEBI:58210"/>
    </ligand>
</feature>
<feature type="binding site" evidence="1">
    <location>
        <position position="71"/>
    </location>
    <ligand>
        <name>substrate</name>
    </ligand>
</feature>
<feature type="binding site" evidence="1">
    <location>
        <position position="91"/>
    </location>
    <ligand>
        <name>FMN</name>
        <dbReference type="ChEBI" id="CHEBI:58210"/>
    </ligand>
</feature>
<feature type="binding site" evidence="1">
    <location>
        <begin position="116"/>
        <end position="120"/>
    </location>
    <ligand>
        <name>substrate</name>
    </ligand>
</feature>
<feature type="binding site" evidence="1">
    <location>
        <position position="143"/>
    </location>
    <ligand>
        <name>FMN</name>
        <dbReference type="ChEBI" id="CHEBI:58210"/>
    </ligand>
</feature>
<feature type="binding site" evidence="1">
    <location>
        <position position="176"/>
    </location>
    <ligand>
        <name>FMN</name>
        <dbReference type="ChEBI" id="CHEBI:58210"/>
    </ligand>
</feature>
<feature type="binding site" evidence="1">
    <location>
        <position position="176"/>
    </location>
    <ligand>
        <name>substrate</name>
    </ligand>
</feature>
<feature type="binding site" evidence="1">
    <location>
        <position position="181"/>
    </location>
    <ligand>
        <name>substrate</name>
    </ligand>
</feature>
<feature type="binding site" evidence="1">
    <location>
        <position position="217"/>
    </location>
    <ligand>
        <name>FMN</name>
        <dbReference type="ChEBI" id="CHEBI:58210"/>
    </ligand>
</feature>
<feature type="binding site" evidence="1">
    <location>
        <position position="245"/>
    </location>
    <ligand>
        <name>FMN</name>
        <dbReference type="ChEBI" id="CHEBI:58210"/>
    </ligand>
</feature>
<feature type="binding site" evidence="1">
    <location>
        <begin position="246"/>
        <end position="247"/>
    </location>
    <ligand>
        <name>substrate</name>
    </ligand>
</feature>
<feature type="binding site" evidence="1">
    <location>
        <position position="267"/>
    </location>
    <ligand>
        <name>FMN</name>
        <dbReference type="ChEBI" id="CHEBI:58210"/>
    </ligand>
</feature>
<feature type="binding site" evidence="1">
    <location>
        <position position="296"/>
    </location>
    <ligand>
        <name>FMN</name>
        <dbReference type="ChEBI" id="CHEBI:58210"/>
    </ligand>
</feature>
<feature type="binding site" evidence="1">
    <location>
        <begin position="317"/>
        <end position="318"/>
    </location>
    <ligand>
        <name>FMN</name>
        <dbReference type="ChEBI" id="CHEBI:58210"/>
    </ligand>
</feature>
<proteinExistence type="inferred from homology"/>